<evidence type="ECO:0000255" key="1">
    <source>
        <dbReference type="HAMAP-Rule" id="MF_00381"/>
    </source>
</evidence>
<accession>A6V2R4</accession>
<proteinExistence type="inferred from homology"/>
<keyword id="KW-0233">DNA recombination</keyword>
<keyword id="KW-0238">DNA-binding</keyword>
<keyword id="KW-0804">Transcription</keyword>
<keyword id="KW-0805">Transcription regulation</keyword>
<keyword id="KW-0810">Translation regulation</keyword>
<gene>
    <name evidence="1" type="primary">ihfB</name>
    <name evidence="1" type="synonym">himD</name>
    <name type="ordered locus">PSPA7_1968</name>
</gene>
<sequence>MTKSELIERIVTHQGQLSAKDVELAIKTMLEQMSQALATGDRIEIRGFGSFSLHYRAPRVGRNPKTGESVRLDGKFVPHFKPGKELRDRVNEPE</sequence>
<dbReference type="EMBL" id="CP000744">
    <property type="protein sequence ID" value="ABR85723.1"/>
    <property type="molecule type" value="Genomic_DNA"/>
</dbReference>
<dbReference type="RefSeq" id="WP_003091441.1">
    <property type="nucleotide sequence ID" value="NC_009656.1"/>
</dbReference>
<dbReference type="SMR" id="A6V2R4"/>
<dbReference type="GeneID" id="79914974"/>
<dbReference type="KEGG" id="pap:PSPA7_1968"/>
<dbReference type="HOGENOM" id="CLU_105066_2_0_6"/>
<dbReference type="Proteomes" id="UP000001582">
    <property type="component" value="Chromosome"/>
</dbReference>
<dbReference type="GO" id="GO:0005694">
    <property type="term" value="C:chromosome"/>
    <property type="evidence" value="ECO:0007669"/>
    <property type="project" value="InterPro"/>
</dbReference>
<dbReference type="GO" id="GO:0005829">
    <property type="term" value="C:cytosol"/>
    <property type="evidence" value="ECO:0007669"/>
    <property type="project" value="TreeGrafter"/>
</dbReference>
<dbReference type="GO" id="GO:0003677">
    <property type="term" value="F:DNA binding"/>
    <property type="evidence" value="ECO:0007669"/>
    <property type="project" value="UniProtKB-UniRule"/>
</dbReference>
<dbReference type="GO" id="GO:0030527">
    <property type="term" value="F:structural constituent of chromatin"/>
    <property type="evidence" value="ECO:0007669"/>
    <property type="project" value="InterPro"/>
</dbReference>
<dbReference type="GO" id="GO:0006310">
    <property type="term" value="P:DNA recombination"/>
    <property type="evidence" value="ECO:0007669"/>
    <property type="project" value="UniProtKB-UniRule"/>
</dbReference>
<dbReference type="GO" id="GO:0006355">
    <property type="term" value="P:regulation of DNA-templated transcription"/>
    <property type="evidence" value="ECO:0007669"/>
    <property type="project" value="UniProtKB-UniRule"/>
</dbReference>
<dbReference type="GO" id="GO:0006417">
    <property type="term" value="P:regulation of translation"/>
    <property type="evidence" value="ECO:0007669"/>
    <property type="project" value="UniProtKB-UniRule"/>
</dbReference>
<dbReference type="CDD" id="cd13836">
    <property type="entry name" value="IHF_B"/>
    <property type="match status" value="1"/>
</dbReference>
<dbReference type="FunFam" id="4.10.520.10:FF:000003">
    <property type="entry name" value="Integration host factor subunit beta"/>
    <property type="match status" value="1"/>
</dbReference>
<dbReference type="Gene3D" id="4.10.520.10">
    <property type="entry name" value="IHF-like DNA-binding proteins"/>
    <property type="match status" value="1"/>
</dbReference>
<dbReference type="HAMAP" id="MF_00381">
    <property type="entry name" value="IHF_beta"/>
    <property type="match status" value="1"/>
</dbReference>
<dbReference type="InterPro" id="IPR000119">
    <property type="entry name" value="Hist_DNA-bd"/>
</dbReference>
<dbReference type="InterPro" id="IPR020816">
    <property type="entry name" value="Histone-like_DNA-bd_CS"/>
</dbReference>
<dbReference type="InterPro" id="IPR010992">
    <property type="entry name" value="IHF-like_DNA-bd_dom_sf"/>
</dbReference>
<dbReference type="InterPro" id="IPR005685">
    <property type="entry name" value="IHF_beta"/>
</dbReference>
<dbReference type="NCBIfam" id="TIGR00988">
    <property type="entry name" value="hip"/>
    <property type="match status" value="1"/>
</dbReference>
<dbReference type="NCBIfam" id="NF001222">
    <property type="entry name" value="PRK00199.1"/>
    <property type="match status" value="1"/>
</dbReference>
<dbReference type="PANTHER" id="PTHR33175">
    <property type="entry name" value="DNA-BINDING PROTEIN HU"/>
    <property type="match status" value="1"/>
</dbReference>
<dbReference type="PANTHER" id="PTHR33175:SF5">
    <property type="entry name" value="INTEGRATION HOST FACTOR SUBUNIT BETA"/>
    <property type="match status" value="1"/>
</dbReference>
<dbReference type="Pfam" id="PF00216">
    <property type="entry name" value="Bac_DNA_binding"/>
    <property type="match status" value="1"/>
</dbReference>
<dbReference type="PRINTS" id="PR01727">
    <property type="entry name" value="DNABINDINGHU"/>
</dbReference>
<dbReference type="SMART" id="SM00411">
    <property type="entry name" value="BHL"/>
    <property type="match status" value="1"/>
</dbReference>
<dbReference type="SUPFAM" id="SSF47729">
    <property type="entry name" value="IHF-like DNA-binding proteins"/>
    <property type="match status" value="1"/>
</dbReference>
<dbReference type="PROSITE" id="PS00045">
    <property type="entry name" value="HISTONE_LIKE"/>
    <property type="match status" value="1"/>
</dbReference>
<name>IHFB_PSEP7</name>
<reference key="1">
    <citation type="submission" date="2007-06" db="EMBL/GenBank/DDBJ databases">
        <authorList>
            <person name="Dodson R.J."/>
            <person name="Harkins D."/>
            <person name="Paulsen I.T."/>
        </authorList>
    </citation>
    <scope>NUCLEOTIDE SEQUENCE [LARGE SCALE GENOMIC DNA]</scope>
    <source>
        <strain>DSM 24068 / PA7</strain>
    </source>
</reference>
<protein>
    <recommendedName>
        <fullName evidence="1">Integration host factor subunit beta</fullName>
        <shortName evidence="1">IHF-beta</shortName>
    </recommendedName>
</protein>
<comment type="function">
    <text evidence="1">This protein is one of the two subunits of integration host factor, a specific DNA-binding protein that functions in genetic recombination as well as in transcriptional and translational control.</text>
</comment>
<comment type="subunit">
    <text evidence="1">Heterodimer of an alpha and a beta chain.</text>
</comment>
<comment type="similarity">
    <text evidence="1">Belongs to the bacterial histone-like protein family.</text>
</comment>
<feature type="chain" id="PRO_1000060630" description="Integration host factor subunit beta">
    <location>
        <begin position="1"/>
        <end position="94"/>
    </location>
</feature>
<organism>
    <name type="scientific">Pseudomonas paraeruginosa (strain DSM 24068 / PA7)</name>
    <name type="common">Pseudomonas aeruginosa (strain PA7)</name>
    <dbReference type="NCBI Taxonomy" id="381754"/>
    <lineage>
        <taxon>Bacteria</taxon>
        <taxon>Pseudomonadati</taxon>
        <taxon>Pseudomonadota</taxon>
        <taxon>Gammaproteobacteria</taxon>
        <taxon>Pseudomonadales</taxon>
        <taxon>Pseudomonadaceae</taxon>
        <taxon>Pseudomonas</taxon>
        <taxon>Pseudomonas paraeruginosa</taxon>
    </lineage>
</organism>